<sequence>MSELFSVPYFIENLKQHIEMNQSEDKIHAMNSYYRSVVSTLVQDQLTKNAVVLKRIQHLDEAYNKVKRGESK</sequence>
<keyword id="KW-0002">3D-structure</keyword>
<keyword id="KW-1185">Reference proteome</keyword>
<protein>
    <recommendedName>
        <fullName>Uncharacterized protein YvfG</fullName>
    </recommendedName>
</protein>
<accession>P71066</accession>
<accession>O08184</accession>
<feature type="chain" id="PRO_0000049941" description="Uncharacterized protein YvfG">
    <location>
        <begin position="1"/>
        <end position="72"/>
    </location>
</feature>
<feature type="helix" evidence="1">
    <location>
        <begin position="7"/>
        <end position="20"/>
    </location>
</feature>
<feature type="strand" evidence="1">
    <location>
        <begin position="22"/>
        <end position="24"/>
    </location>
</feature>
<feature type="helix" evidence="1">
    <location>
        <begin position="26"/>
        <end position="43"/>
    </location>
</feature>
<feature type="strand" evidence="1">
    <location>
        <begin position="45"/>
        <end position="47"/>
    </location>
</feature>
<feature type="helix" evidence="1">
    <location>
        <begin position="49"/>
        <end position="68"/>
    </location>
</feature>
<name>YVFG_BACSU</name>
<organism>
    <name type="scientific">Bacillus subtilis (strain 168)</name>
    <dbReference type="NCBI Taxonomy" id="224308"/>
    <lineage>
        <taxon>Bacteria</taxon>
        <taxon>Bacillati</taxon>
        <taxon>Bacillota</taxon>
        <taxon>Bacilli</taxon>
        <taxon>Bacillales</taxon>
        <taxon>Bacillaceae</taxon>
        <taxon>Bacillus</taxon>
    </lineage>
</organism>
<proteinExistence type="evidence at protein level"/>
<gene>
    <name type="primary">yvfG</name>
    <name type="ordered locus">BSU34210</name>
</gene>
<dbReference type="EMBL" id="Z71928">
    <property type="protein sequence ID" value="CAA96484.1"/>
    <property type="molecule type" value="Genomic_DNA"/>
</dbReference>
<dbReference type="EMBL" id="Z94043">
    <property type="protein sequence ID" value="CAB08000.1"/>
    <property type="molecule type" value="Genomic_DNA"/>
</dbReference>
<dbReference type="EMBL" id="AL009126">
    <property type="protein sequence ID" value="CAB15426.1"/>
    <property type="molecule type" value="Genomic_DNA"/>
</dbReference>
<dbReference type="PIR" id="H70037">
    <property type="entry name" value="H70037"/>
</dbReference>
<dbReference type="RefSeq" id="NP_391301.1">
    <property type="nucleotide sequence ID" value="NC_000964.3"/>
</dbReference>
<dbReference type="RefSeq" id="WP_003219905.1">
    <property type="nucleotide sequence ID" value="NZ_OZ025638.1"/>
</dbReference>
<dbReference type="PDB" id="2GSV">
    <property type="method" value="X-ray"/>
    <property type="resolution" value="1.90 A"/>
    <property type="chains" value="A/B=1-72"/>
</dbReference>
<dbReference type="PDB" id="2JS1">
    <property type="method" value="NMR"/>
    <property type="chains" value="A/B=1-72"/>
</dbReference>
<dbReference type="PDBsum" id="2GSV"/>
<dbReference type="PDBsum" id="2JS1"/>
<dbReference type="SMR" id="P71066"/>
<dbReference type="FunCoup" id="P71066">
    <property type="interactions" value="2"/>
</dbReference>
<dbReference type="STRING" id="224308.BSU34210"/>
<dbReference type="jPOST" id="P71066"/>
<dbReference type="PaxDb" id="224308-BSU34210"/>
<dbReference type="EnsemblBacteria" id="CAB15426">
    <property type="protein sequence ID" value="CAB15426"/>
    <property type="gene ID" value="BSU_34210"/>
</dbReference>
<dbReference type="GeneID" id="86871974"/>
<dbReference type="GeneID" id="936336"/>
<dbReference type="KEGG" id="bsu:BSU34210"/>
<dbReference type="PATRIC" id="fig|224308.179.peg.3708"/>
<dbReference type="eggNOG" id="ENOG5033EQP">
    <property type="taxonomic scope" value="Bacteria"/>
</dbReference>
<dbReference type="InParanoid" id="P71066"/>
<dbReference type="OrthoDB" id="2883629at2"/>
<dbReference type="BioCyc" id="BSUB:BSU34210-MONOMER"/>
<dbReference type="EvolutionaryTrace" id="P71066"/>
<dbReference type="PRO" id="PR:P71066"/>
<dbReference type="Proteomes" id="UP000001570">
    <property type="component" value="Chromosome"/>
</dbReference>
<dbReference type="Gene3D" id="6.10.140.40">
    <property type="match status" value="1"/>
</dbReference>
<dbReference type="InterPro" id="IPR018590">
    <property type="entry name" value="Uncharacterised_YvfG"/>
</dbReference>
<dbReference type="InterPro" id="IPR037247">
    <property type="entry name" value="YvfG_sf"/>
</dbReference>
<dbReference type="Pfam" id="PF09628">
    <property type="entry name" value="YvfG"/>
    <property type="match status" value="1"/>
</dbReference>
<dbReference type="SUPFAM" id="SSF158388">
    <property type="entry name" value="YvfG-like"/>
    <property type="match status" value="1"/>
</dbReference>
<evidence type="ECO:0007829" key="1">
    <source>
        <dbReference type="PDB" id="2GSV"/>
    </source>
</evidence>
<reference key="1">
    <citation type="journal article" date="1996" name="Microbiology">
        <title>Integrated mapping and sequencing of a 115 kb DNA fragment from Bacillus subtilis: sequence analysis of a 21 kb segment containing the sigL locus.</title>
        <authorList>
            <person name="Fabret C."/>
            <person name="Quentin Y."/>
            <person name="Chapal N."/>
            <person name="Guiseppi A."/>
            <person name="Haiech J."/>
            <person name="Denizot F."/>
        </authorList>
    </citation>
    <scope>NUCLEOTIDE SEQUENCE [GENOMIC DNA]</scope>
    <source>
        <strain>168</strain>
    </source>
</reference>
<reference key="2">
    <citation type="submission" date="1997-04" db="EMBL/GenBank/DDBJ databases">
        <authorList>
            <person name="Denizot F."/>
        </authorList>
    </citation>
    <scope>NUCLEOTIDE SEQUENCE [GENOMIC DNA]</scope>
    <source>
        <strain>168</strain>
    </source>
</reference>
<reference key="3">
    <citation type="journal article" date="1997" name="Nature">
        <title>The complete genome sequence of the Gram-positive bacterium Bacillus subtilis.</title>
        <authorList>
            <person name="Kunst F."/>
            <person name="Ogasawara N."/>
            <person name="Moszer I."/>
            <person name="Albertini A.M."/>
            <person name="Alloni G."/>
            <person name="Azevedo V."/>
            <person name="Bertero M.G."/>
            <person name="Bessieres P."/>
            <person name="Bolotin A."/>
            <person name="Borchert S."/>
            <person name="Borriss R."/>
            <person name="Boursier L."/>
            <person name="Brans A."/>
            <person name="Braun M."/>
            <person name="Brignell S.C."/>
            <person name="Bron S."/>
            <person name="Brouillet S."/>
            <person name="Bruschi C.V."/>
            <person name="Caldwell B."/>
            <person name="Capuano V."/>
            <person name="Carter N.M."/>
            <person name="Choi S.-K."/>
            <person name="Codani J.-J."/>
            <person name="Connerton I.F."/>
            <person name="Cummings N.J."/>
            <person name="Daniel R.A."/>
            <person name="Denizot F."/>
            <person name="Devine K.M."/>
            <person name="Duesterhoeft A."/>
            <person name="Ehrlich S.D."/>
            <person name="Emmerson P.T."/>
            <person name="Entian K.-D."/>
            <person name="Errington J."/>
            <person name="Fabret C."/>
            <person name="Ferrari E."/>
            <person name="Foulger D."/>
            <person name="Fritz C."/>
            <person name="Fujita M."/>
            <person name="Fujita Y."/>
            <person name="Fuma S."/>
            <person name="Galizzi A."/>
            <person name="Galleron N."/>
            <person name="Ghim S.-Y."/>
            <person name="Glaser P."/>
            <person name="Goffeau A."/>
            <person name="Golightly E.J."/>
            <person name="Grandi G."/>
            <person name="Guiseppi G."/>
            <person name="Guy B.J."/>
            <person name="Haga K."/>
            <person name="Haiech J."/>
            <person name="Harwood C.R."/>
            <person name="Henaut A."/>
            <person name="Hilbert H."/>
            <person name="Holsappel S."/>
            <person name="Hosono S."/>
            <person name="Hullo M.-F."/>
            <person name="Itaya M."/>
            <person name="Jones L.-M."/>
            <person name="Joris B."/>
            <person name="Karamata D."/>
            <person name="Kasahara Y."/>
            <person name="Klaerr-Blanchard M."/>
            <person name="Klein C."/>
            <person name="Kobayashi Y."/>
            <person name="Koetter P."/>
            <person name="Koningstein G."/>
            <person name="Krogh S."/>
            <person name="Kumano M."/>
            <person name="Kurita K."/>
            <person name="Lapidus A."/>
            <person name="Lardinois S."/>
            <person name="Lauber J."/>
            <person name="Lazarevic V."/>
            <person name="Lee S.-M."/>
            <person name="Levine A."/>
            <person name="Liu H."/>
            <person name="Masuda S."/>
            <person name="Mauel C."/>
            <person name="Medigue C."/>
            <person name="Medina N."/>
            <person name="Mellado R.P."/>
            <person name="Mizuno M."/>
            <person name="Moestl D."/>
            <person name="Nakai S."/>
            <person name="Noback M."/>
            <person name="Noone D."/>
            <person name="O'Reilly M."/>
            <person name="Ogawa K."/>
            <person name="Ogiwara A."/>
            <person name="Oudega B."/>
            <person name="Park S.-H."/>
            <person name="Parro V."/>
            <person name="Pohl T.M."/>
            <person name="Portetelle D."/>
            <person name="Porwollik S."/>
            <person name="Prescott A.M."/>
            <person name="Presecan E."/>
            <person name="Pujic P."/>
            <person name="Purnelle B."/>
            <person name="Rapoport G."/>
            <person name="Rey M."/>
            <person name="Reynolds S."/>
            <person name="Rieger M."/>
            <person name="Rivolta C."/>
            <person name="Rocha E."/>
            <person name="Roche B."/>
            <person name="Rose M."/>
            <person name="Sadaie Y."/>
            <person name="Sato T."/>
            <person name="Scanlan E."/>
            <person name="Schleich S."/>
            <person name="Schroeter R."/>
            <person name="Scoffone F."/>
            <person name="Sekiguchi J."/>
            <person name="Sekowska A."/>
            <person name="Seror S.J."/>
            <person name="Serror P."/>
            <person name="Shin B.-S."/>
            <person name="Soldo B."/>
            <person name="Sorokin A."/>
            <person name="Tacconi E."/>
            <person name="Takagi T."/>
            <person name="Takahashi H."/>
            <person name="Takemaru K."/>
            <person name="Takeuchi M."/>
            <person name="Tamakoshi A."/>
            <person name="Tanaka T."/>
            <person name="Terpstra P."/>
            <person name="Tognoni A."/>
            <person name="Tosato V."/>
            <person name="Uchiyama S."/>
            <person name="Vandenbol M."/>
            <person name="Vannier F."/>
            <person name="Vassarotti A."/>
            <person name="Viari A."/>
            <person name="Wambutt R."/>
            <person name="Wedler E."/>
            <person name="Wedler H."/>
            <person name="Weitzenegger T."/>
            <person name="Winters P."/>
            <person name="Wipat A."/>
            <person name="Yamamoto H."/>
            <person name="Yamane K."/>
            <person name="Yasumoto K."/>
            <person name="Yata K."/>
            <person name="Yoshida K."/>
            <person name="Yoshikawa H.-F."/>
            <person name="Zumstein E."/>
            <person name="Yoshikawa H."/>
            <person name="Danchin A."/>
        </authorList>
    </citation>
    <scope>NUCLEOTIDE SEQUENCE [LARGE SCALE GENOMIC DNA]</scope>
    <source>
        <strain>168</strain>
    </source>
</reference>
<reference key="4">
    <citation type="submission" date="2006-05" db="PDB data bank">
        <title>Crystal structure of the hypothetical protein yvfG from Bacillus subtilis, northeast structural genomics target SR478.</title>
        <authorList>
            <consortium name="Northeast structural genomics consortium (NESG)"/>
        </authorList>
    </citation>
    <scope>X-RAY CRYSTALLOGRAPHY (1.9 ANGSTROMS)</scope>
</reference>
<reference key="5">
    <citation type="submission" date="2007-10" db="PDB data bank">
        <title>NMR structure of the Bacillus subtilis protein yvfG.</title>
        <authorList>
            <consortium name="Northeast structural genomics consortium (NESG)"/>
        </authorList>
    </citation>
    <scope>STRUCTURE BY NMR</scope>
</reference>